<keyword id="KW-0007">Acetylation</keyword>
<keyword id="KW-0025">Alternative splicing</keyword>
<keyword id="KW-0131">Cell cycle</keyword>
<keyword id="KW-0175">Coiled coil</keyword>
<keyword id="KW-0237">DNA synthesis</keyword>
<keyword id="KW-1017">Isopeptide bond</keyword>
<keyword id="KW-0539">Nucleus</keyword>
<keyword id="KW-0597">Phosphoprotein</keyword>
<keyword id="KW-1185">Reference proteome</keyword>
<keyword id="KW-0043">Tumor suppressor</keyword>
<keyword id="KW-0832">Ubl conjugation</keyword>
<protein>
    <recommendedName>
        <fullName>Protein lin-9 homolog</fullName>
        <shortName>mLin-9</shortName>
    </recommendedName>
    <alternativeName>
        <fullName>TUDOR gene similar 1 protein</fullName>
    </alternativeName>
    <alternativeName>
        <fullName>Type I interferon receptor beta chain-associated protein</fullName>
    </alternativeName>
</protein>
<proteinExistence type="evidence at protein level"/>
<name>LIN9_MOUSE</name>
<sequence length="542" mass="61759">MAELDQLPDESSSAKALVSLKEGSLSNTWNEKYSSLQKTPVWKGRNAGPAVEMPFRNSKRSRLFSDEDDRQINTKSPKRNQRVAMIPQKFTATMSTPDKKASQKIGFRLRNLLKLPKAHKWCIYEWFYSNIDKPLFEGDNDFCVCLKESFPNLKTRKLTRVEWGKIRRLMGKPRRCSSAFFEEERSALKQKRQKIRLLQQRKVADVSQFKDLPDEIPLPLVIGTKVTARLRGIHDGLFTGQIDAVDTLNATYRVTFDRTGLGTHTIPDYEVLSNEPHETMPISAFGQKQRPSRFFMTPPRLHYTPPLQSPITDGDPLLGQSPWRSKVSGSDTETLGGFPVEFLIQVTKLSKILMIKKEHIKKLREMNTEAEKLKSYSMPIGIEFQRRYATIVLELEQLNKDLNKVLHKVQQYCYELAPDQGLQPADQPTDMRRRCEEEAQEIVRQANSASGQPCVENENLTDLISRLTAILLQIKCLAEGGDLNSFEFKSLTDSLNDIKNTIDASNISCFQNNVEIHVAHIQSGLSQMGNLHAFAANNTNRD</sequence>
<feature type="initiator methionine" description="Removed" evidence="2">
    <location>
        <position position="1"/>
    </location>
</feature>
<feature type="chain" id="PRO_0000249548" description="Protein lin-9 homolog">
    <location>
        <begin position="2"/>
        <end position="542"/>
    </location>
</feature>
<feature type="modified residue" description="N-acetylalanine" evidence="2">
    <location>
        <position position="2"/>
    </location>
</feature>
<feature type="modified residue" description="Phosphoserine" evidence="2">
    <location>
        <position position="65"/>
    </location>
</feature>
<feature type="modified residue" description="Phosphoserine" evidence="5">
    <location>
        <position position="95"/>
    </location>
</feature>
<feature type="modified residue" description="Phosphothreonine" evidence="2">
    <location>
        <position position="96"/>
    </location>
</feature>
<feature type="modified residue" description="Phosphothreonine" evidence="5">
    <location>
        <position position="304"/>
    </location>
</feature>
<feature type="modified residue" description="Phosphoserine" evidence="5">
    <location>
        <position position="309"/>
    </location>
</feature>
<feature type="modified residue" description="Phosphoserine" evidence="5">
    <location>
        <position position="321"/>
    </location>
</feature>
<feature type="cross-link" description="Glycyl lysine isopeptide (Lys-Gly) (interchain with G-Cter in SUMO2)" evidence="2">
    <location>
        <position position="21"/>
    </location>
</feature>
<feature type="splice variant" id="VSP_020511" description="In isoform 3." evidence="3">
    <original>CSSAFFEEERSALKQKRQKIRLLQQRKVAD</original>
    <variation>EISLKTEAAENQAVTTKESCRCFTVQRSPR</variation>
    <location>
        <begin position="176"/>
        <end position="205"/>
    </location>
</feature>
<feature type="splice variant" id="VSP_020512" description="In isoform 3." evidence="3">
    <location>
        <begin position="206"/>
        <end position="542"/>
    </location>
</feature>
<feature type="splice variant" id="VSP_020513" description="In isoform 2." evidence="3">
    <original>LAPDQGLQPADQPTDMRRRCEEEAQEIVRQANSASGQPCVENENLTDLISRLTAILLQIKCLAEGGDLNSFEFKSLTDSLNDIKNTIDASNISCFQNNVEIHVAHIQSGLSQMGNLHAFAANNTNRD</original>
    <variation>VSGVYCFHWCFVLFCFVILVFFEMGSHSVAMAALETSLASSSEIRLFLPPSAGIKGVRHHAQPNVCCFPSMFCYLKLNDFTFTFCKL</variation>
    <location>
        <begin position="416"/>
        <end position="542"/>
    </location>
</feature>
<feature type="sequence conflict" description="In Ref. 1; BAC35065." evidence="4" ref="1">
    <original>N</original>
    <variation>K</variation>
    <location>
        <position position="152"/>
    </location>
</feature>
<gene>
    <name type="primary">Lin9</name>
    <name type="synonym">Bara</name>
    <name type="synonym">Tgs1</name>
</gene>
<dbReference type="EMBL" id="AK042357">
    <property type="protein sequence ID" value="BAC31235.1"/>
    <property type="status" value="ALT_FRAME"/>
    <property type="molecule type" value="mRNA"/>
</dbReference>
<dbReference type="EMBL" id="AK052618">
    <property type="protein sequence ID" value="BAC35065.1"/>
    <property type="molecule type" value="mRNA"/>
</dbReference>
<dbReference type="EMBL" id="AF190325">
    <property type="protein sequence ID" value="AAQ13712.1"/>
    <property type="status" value="ALT_INIT"/>
    <property type="molecule type" value="mRNA"/>
</dbReference>
<dbReference type="CCDS" id="CCDS48468.2">
    <molecule id="Q8C735-1"/>
</dbReference>
<dbReference type="RefSeq" id="NP_001096652.3">
    <molecule id="Q8C735-1"/>
    <property type="nucleotide sequence ID" value="NM_001103182.3"/>
</dbReference>
<dbReference type="SMR" id="Q8C735"/>
<dbReference type="FunCoup" id="Q8C735">
    <property type="interactions" value="2449"/>
</dbReference>
<dbReference type="STRING" id="10090.ENSMUSP00000141331"/>
<dbReference type="iPTMnet" id="Q8C735"/>
<dbReference type="PhosphoSitePlus" id="Q8C735"/>
<dbReference type="jPOST" id="Q8C735"/>
<dbReference type="PaxDb" id="10090-ENSMUSP00000082959"/>
<dbReference type="PeptideAtlas" id="Q8C735"/>
<dbReference type="ProteomicsDB" id="286206">
    <molecule id="Q8C735-1"/>
</dbReference>
<dbReference type="ProteomicsDB" id="286207">
    <molecule id="Q8C735-2"/>
</dbReference>
<dbReference type="ProteomicsDB" id="286208">
    <molecule id="Q8C735-3"/>
</dbReference>
<dbReference type="Pumba" id="Q8C735"/>
<dbReference type="Ensembl" id="ENSMUST00000192561.6">
    <molecule id="Q8C735-1"/>
    <property type="protein sequence ID" value="ENSMUSP00000141331.3"/>
    <property type="gene ID" value="ENSMUSG00000058729.14"/>
</dbReference>
<dbReference type="GeneID" id="72568"/>
<dbReference type="UCSC" id="uc007dwk.3">
    <molecule id="Q8C735-1"/>
    <property type="organism name" value="mouse"/>
</dbReference>
<dbReference type="UCSC" id="uc007dwl.3">
    <molecule id="Q8C735-2"/>
    <property type="organism name" value="mouse"/>
</dbReference>
<dbReference type="AGR" id="MGI:1919818"/>
<dbReference type="MGI" id="MGI:1919818">
    <property type="gene designation" value="Lin9"/>
</dbReference>
<dbReference type="eggNOG" id="KOG1019">
    <property type="taxonomic scope" value="Eukaryota"/>
</dbReference>
<dbReference type="GeneTree" id="ENSGT00390000003188"/>
<dbReference type="InParanoid" id="Q8C735"/>
<dbReference type="OrthoDB" id="2339771at2759"/>
<dbReference type="PhylomeDB" id="Q8C735"/>
<dbReference type="TreeFam" id="TF314315"/>
<dbReference type="Reactome" id="R-MMU-1538133">
    <property type="pathway name" value="G0 and Early G1"/>
</dbReference>
<dbReference type="ChiTaRS" id="Lin9">
    <property type="organism name" value="mouse"/>
</dbReference>
<dbReference type="PRO" id="PR:Q8C735"/>
<dbReference type="Proteomes" id="UP000000589">
    <property type="component" value="Chromosome 1"/>
</dbReference>
<dbReference type="RNAct" id="Q8C735">
    <property type="molecule type" value="protein"/>
</dbReference>
<dbReference type="GO" id="GO:0005654">
    <property type="term" value="C:nucleoplasm"/>
    <property type="evidence" value="ECO:0007669"/>
    <property type="project" value="UniProtKB-SubCell"/>
</dbReference>
<dbReference type="GO" id="GO:0017053">
    <property type="term" value="C:transcription repressor complex"/>
    <property type="evidence" value="ECO:0007669"/>
    <property type="project" value="InterPro"/>
</dbReference>
<dbReference type="GO" id="GO:0071897">
    <property type="term" value="P:DNA biosynthetic process"/>
    <property type="evidence" value="ECO:0007669"/>
    <property type="project" value="UniProtKB-KW"/>
</dbReference>
<dbReference type="GO" id="GO:0006351">
    <property type="term" value="P:DNA-templated transcription"/>
    <property type="evidence" value="ECO:0007669"/>
    <property type="project" value="InterPro"/>
</dbReference>
<dbReference type="InterPro" id="IPR033471">
    <property type="entry name" value="DIRP"/>
</dbReference>
<dbReference type="InterPro" id="IPR010561">
    <property type="entry name" value="LIN-9/ALY1"/>
</dbReference>
<dbReference type="InterPro" id="IPR045831">
    <property type="entry name" value="LIN9_C"/>
</dbReference>
<dbReference type="PANTHER" id="PTHR21689">
    <property type="entry name" value="LIN-9"/>
    <property type="match status" value="1"/>
</dbReference>
<dbReference type="PANTHER" id="PTHR21689:SF2">
    <property type="entry name" value="PROTEIN LIN-9 HOMOLOG"/>
    <property type="match status" value="1"/>
</dbReference>
<dbReference type="Pfam" id="PF06584">
    <property type="entry name" value="DIRP"/>
    <property type="match status" value="1"/>
</dbReference>
<dbReference type="Pfam" id="PF19438">
    <property type="entry name" value="LIN9_C"/>
    <property type="match status" value="1"/>
</dbReference>
<dbReference type="SMART" id="SM01135">
    <property type="entry name" value="DIRP"/>
    <property type="match status" value="1"/>
</dbReference>
<comment type="function">
    <text evidence="1">Acts as a tumor suppressor. Inhibits DNA synthesis. Its ability to inhibit oncogenic transformation is mediated through its association with RB1. Plays a role in the expression of genes required for the G1/S transition (By similarity).</text>
</comment>
<comment type="subunit">
    <text evidence="1">Component of the DREAM complex (also named LINC complex) at least composed of E2F4, E2F5, LIN9, LIN37, LIN52, LIN54, MYBL1, MYBL2, RBL1, RBL2, RBBP4, TFDP1 and TFDP2. The complex exists in quiescent cells where it represses cell cycle-dependent genes. It dissociates in S phase when LIN9, LIN37, LIN52 and LIN54 form a subcomplex that binds to MYBL2. Interacts with RB1 (By similarity).</text>
</comment>
<comment type="subcellular location">
    <subcellularLocation>
        <location evidence="1">Nucleus</location>
        <location evidence="1">Nucleoplasm</location>
    </subcellularLocation>
    <text evidence="1">Found in perinucleolar structures. Associated with chromatin.</text>
</comment>
<comment type="alternative products">
    <event type="alternative splicing"/>
    <isoform>
        <id>Q8C735-1</id>
        <name>1</name>
        <sequence type="displayed"/>
    </isoform>
    <isoform>
        <id>Q8C735-2</id>
        <name>2</name>
        <sequence type="described" ref="VSP_020513"/>
    </isoform>
    <isoform>
        <id>Q8C735-3</id>
        <name>3</name>
        <sequence type="described" ref="VSP_020511 VSP_020512"/>
    </isoform>
</comment>
<comment type="similarity">
    <text evidence="4">Belongs to the lin-9 family.</text>
</comment>
<comment type="sequence caution" evidence="4">
    <conflict type="erroneous initiation">
        <sequence resource="EMBL-CDS" id="AAQ13712"/>
    </conflict>
</comment>
<comment type="sequence caution" evidence="4">
    <conflict type="frameshift">
        <sequence resource="EMBL-CDS" id="BAC31235"/>
    </conflict>
</comment>
<organism>
    <name type="scientific">Mus musculus</name>
    <name type="common">Mouse</name>
    <dbReference type="NCBI Taxonomy" id="10090"/>
    <lineage>
        <taxon>Eukaryota</taxon>
        <taxon>Metazoa</taxon>
        <taxon>Chordata</taxon>
        <taxon>Craniata</taxon>
        <taxon>Vertebrata</taxon>
        <taxon>Euteleostomi</taxon>
        <taxon>Mammalia</taxon>
        <taxon>Eutheria</taxon>
        <taxon>Euarchontoglires</taxon>
        <taxon>Glires</taxon>
        <taxon>Rodentia</taxon>
        <taxon>Myomorpha</taxon>
        <taxon>Muroidea</taxon>
        <taxon>Muridae</taxon>
        <taxon>Murinae</taxon>
        <taxon>Mus</taxon>
        <taxon>Mus</taxon>
    </lineage>
</organism>
<reference key="1">
    <citation type="journal article" date="2005" name="Science">
        <title>The transcriptional landscape of the mammalian genome.</title>
        <authorList>
            <person name="Carninci P."/>
            <person name="Kasukawa T."/>
            <person name="Katayama S."/>
            <person name="Gough J."/>
            <person name="Frith M.C."/>
            <person name="Maeda N."/>
            <person name="Oyama R."/>
            <person name="Ravasi T."/>
            <person name="Lenhard B."/>
            <person name="Wells C."/>
            <person name="Kodzius R."/>
            <person name="Shimokawa K."/>
            <person name="Bajic V.B."/>
            <person name="Brenner S.E."/>
            <person name="Batalov S."/>
            <person name="Forrest A.R."/>
            <person name="Zavolan M."/>
            <person name="Davis M.J."/>
            <person name="Wilming L.G."/>
            <person name="Aidinis V."/>
            <person name="Allen J.E."/>
            <person name="Ambesi-Impiombato A."/>
            <person name="Apweiler R."/>
            <person name="Aturaliya R.N."/>
            <person name="Bailey T.L."/>
            <person name="Bansal M."/>
            <person name="Baxter L."/>
            <person name="Beisel K.W."/>
            <person name="Bersano T."/>
            <person name="Bono H."/>
            <person name="Chalk A.M."/>
            <person name="Chiu K.P."/>
            <person name="Choudhary V."/>
            <person name="Christoffels A."/>
            <person name="Clutterbuck D.R."/>
            <person name="Crowe M.L."/>
            <person name="Dalla E."/>
            <person name="Dalrymple B.P."/>
            <person name="de Bono B."/>
            <person name="Della Gatta G."/>
            <person name="di Bernardo D."/>
            <person name="Down T."/>
            <person name="Engstrom P."/>
            <person name="Fagiolini M."/>
            <person name="Faulkner G."/>
            <person name="Fletcher C.F."/>
            <person name="Fukushima T."/>
            <person name="Furuno M."/>
            <person name="Futaki S."/>
            <person name="Gariboldi M."/>
            <person name="Georgii-Hemming P."/>
            <person name="Gingeras T.R."/>
            <person name="Gojobori T."/>
            <person name="Green R.E."/>
            <person name="Gustincich S."/>
            <person name="Harbers M."/>
            <person name="Hayashi Y."/>
            <person name="Hensch T.K."/>
            <person name="Hirokawa N."/>
            <person name="Hill D."/>
            <person name="Huminiecki L."/>
            <person name="Iacono M."/>
            <person name="Ikeo K."/>
            <person name="Iwama A."/>
            <person name="Ishikawa T."/>
            <person name="Jakt M."/>
            <person name="Kanapin A."/>
            <person name="Katoh M."/>
            <person name="Kawasawa Y."/>
            <person name="Kelso J."/>
            <person name="Kitamura H."/>
            <person name="Kitano H."/>
            <person name="Kollias G."/>
            <person name="Krishnan S.P."/>
            <person name="Kruger A."/>
            <person name="Kummerfeld S.K."/>
            <person name="Kurochkin I.V."/>
            <person name="Lareau L.F."/>
            <person name="Lazarevic D."/>
            <person name="Lipovich L."/>
            <person name="Liu J."/>
            <person name="Liuni S."/>
            <person name="McWilliam S."/>
            <person name="Madan Babu M."/>
            <person name="Madera M."/>
            <person name="Marchionni L."/>
            <person name="Matsuda H."/>
            <person name="Matsuzawa S."/>
            <person name="Miki H."/>
            <person name="Mignone F."/>
            <person name="Miyake S."/>
            <person name="Morris K."/>
            <person name="Mottagui-Tabar S."/>
            <person name="Mulder N."/>
            <person name="Nakano N."/>
            <person name="Nakauchi H."/>
            <person name="Ng P."/>
            <person name="Nilsson R."/>
            <person name="Nishiguchi S."/>
            <person name="Nishikawa S."/>
            <person name="Nori F."/>
            <person name="Ohara O."/>
            <person name="Okazaki Y."/>
            <person name="Orlando V."/>
            <person name="Pang K.C."/>
            <person name="Pavan W.J."/>
            <person name="Pavesi G."/>
            <person name="Pesole G."/>
            <person name="Petrovsky N."/>
            <person name="Piazza S."/>
            <person name="Reed J."/>
            <person name="Reid J.F."/>
            <person name="Ring B.Z."/>
            <person name="Ringwald M."/>
            <person name="Rost B."/>
            <person name="Ruan Y."/>
            <person name="Salzberg S.L."/>
            <person name="Sandelin A."/>
            <person name="Schneider C."/>
            <person name="Schoenbach C."/>
            <person name="Sekiguchi K."/>
            <person name="Semple C.A."/>
            <person name="Seno S."/>
            <person name="Sessa L."/>
            <person name="Sheng Y."/>
            <person name="Shibata Y."/>
            <person name="Shimada H."/>
            <person name="Shimada K."/>
            <person name="Silva D."/>
            <person name="Sinclair B."/>
            <person name="Sperling S."/>
            <person name="Stupka E."/>
            <person name="Sugiura K."/>
            <person name="Sultana R."/>
            <person name="Takenaka Y."/>
            <person name="Taki K."/>
            <person name="Tammoja K."/>
            <person name="Tan S.L."/>
            <person name="Tang S."/>
            <person name="Taylor M.S."/>
            <person name="Tegner J."/>
            <person name="Teichmann S.A."/>
            <person name="Ueda H.R."/>
            <person name="van Nimwegen E."/>
            <person name="Verardo R."/>
            <person name="Wei C.L."/>
            <person name="Yagi K."/>
            <person name="Yamanishi H."/>
            <person name="Zabarovsky E."/>
            <person name="Zhu S."/>
            <person name="Zimmer A."/>
            <person name="Hide W."/>
            <person name="Bult C."/>
            <person name="Grimmond S.M."/>
            <person name="Teasdale R.D."/>
            <person name="Liu E.T."/>
            <person name="Brusic V."/>
            <person name="Quackenbush J."/>
            <person name="Wahlestedt C."/>
            <person name="Mattick J.S."/>
            <person name="Hume D.A."/>
            <person name="Kai C."/>
            <person name="Sasaki D."/>
            <person name="Tomaru Y."/>
            <person name="Fukuda S."/>
            <person name="Kanamori-Katayama M."/>
            <person name="Suzuki M."/>
            <person name="Aoki J."/>
            <person name="Arakawa T."/>
            <person name="Iida J."/>
            <person name="Imamura K."/>
            <person name="Itoh M."/>
            <person name="Kato T."/>
            <person name="Kawaji H."/>
            <person name="Kawagashira N."/>
            <person name="Kawashima T."/>
            <person name="Kojima M."/>
            <person name="Kondo S."/>
            <person name="Konno H."/>
            <person name="Nakano K."/>
            <person name="Ninomiya N."/>
            <person name="Nishio T."/>
            <person name="Okada M."/>
            <person name="Plessy C."/>
            <person name="Shibata K."/>
            <person name="Shiraki T."/>
            <person name="Suzuki S."/>
            <person name="Tagami M."/>
            <person name="Waki K."/>
            <person name="Watahiki A."/>
            <person name="Okamura-Oho Y."/>
            <person name="Suzuki H."/>
            <person name="Kawai J."/>
            <person name="Hayashizaki Y."/>
        </authorList>
    </citation>
    <scope>NUCLEOTIDE SEQUENCE [LARGE SCALE MRNA] (ISOFORM 2)</scope>
    <scope>NUCLEOTIDE SEQUENCE [LARGE SCALE MRNA] OF 2-205 (ISOFORM 3)</scope>
    <source>
        <strain>C57BL/6J</strain>
        <tissue>Kidney</tissue>
        <tissue>Thymus</tissue>
    </source>
</reference>
<reference key="2">
    <citation type="journal article" date="2006" name="Exp. Cell Res.">
        <title>A mutant allele of BARA/LIN-9 rescues the cdk4-/- phenotype by releasing the repression on E2F-regulated genes.</title>
        <authorList>
            <person name="Sandoval R."/>
            <person name="Xue J."/>
            <person name="Tian X."/>
            <person name="Barrett K."/>
            <person name="Pilkinton M."/>
            <person name="Ucker D.S."/>
            <person name="Raychaudhuri P."/>
            <person name="Kineman R.D."/>
            <person name="Luque R.M."/>
            <person name="Baida G."/>
            <person name="Zou X."/>
            <person name="Valli V.E."/>
            <person name="Cook J.L."/>
            <person name="Kiyokawa H."/>
            <person name="Colamonici O.R."/>
        </authorList>
    </citation>
    <scope>NUCLEOTIDE SEQUENCE [MRNA] OF 1-537 (ISOFORM 1)</scope>
</reference>
<reference key="3">
    <citation type="journal article" date="2010" name="Cell">
        <title>A tissue-specific atlas of mouse protein phosphorylation and expression.</title>
        <authorList>
            <person name="Huttlin E.L."/>
            <person name="Jedrychowski M.P."/>
            <person name="Elias J.E."/>
            <person name="Goswami T."/>
            <person name="Rad R."/>
            <person name="Beausoleil S.A."/>
            <person name="Villen J."/>
            <person name="Haas W."/>
            <person name="Sowa M.E."/>
            <person name="Gygi S.P."/>
        </authorList>
    </citation>
    <scope>PHOSPHORYLATION [LARGE SCALE ANALYSIS] AT SER-95; THR-304; SER-309 AND SER-321</scope>
    <scope>IDENTIFICATION BY MASS SPECTROMETRY [LARGE SCALE ANALYSIS]</scope>
    <source>
        <tissue>Kidney</tissue>
        <tissue>Liver</tissue>
        <tissue>Spleen</tissue>
        <tissue>Testis</tissue>
    </source>
</reference>
<accession>Q8C735</accession>
<accession>Q5TKA0</accession>
<accession>Q8C9D8</accession>
<evidence type="ECO:0000250" key="1"/>
<evidence type="ECO:0000250" key="2">
    <source>
        <dbReference type="UniProtKB" id="Q5TKA1"/>
    </source>
</evidence>
<evidence type="ECO:0000303" key="3">
    <source>
    </source>
</evidence>
<evidence type="ECO:0000305" key="4"/>
<evidence type="ECO:0007744" key="5">
    <source>
    </source>
</evidence>